<organism>
    <name type="scientific">Cyanothece sp. (strain PCC 7425 / ATCC 29141)</name>
    <dbReference type="NCBI Taxonomy" id="395961"/>
    <lineage>
        <taxon>Bacteria</taxon>
        <taxon>Bacillati</taxon>
        <taxon>Cyanobacteriota</taxon>
        <taxon>Cyanophyceae</taxon>
        <taxon>Gomontiellales</taxon>
        <taxon>Cyanothecaceae</taxon>
        <taxon>Cyanothece</taxon>
    </lineage>
</organism>
<evidence type="ECO:0000255" key="1">
    <source>
        <dbReference type="HAMAP-Rule" id="MF_00456"/>
    </source>
</evidence>
<proteinExistence type="inferred from homology"/>
<feature type="chain" id="PRO_1000193691" description="Glutamate 5-kinase">
    <location>
        <begin position="1"/>
        <end position="367"/>
    </location>
</feature>
<feature type="domain" description="PUA" evidence="1">
    <location>
        <begin position="275"/>
        <end position="353"/>
    </location>
</feature>
<feature type="binding site" evidence="1">
    <location>
        <position position="8"/>
    </location>
    <ligand>
        <name>ATP</name>
        <dbReference type="ChEBI" id="CHEBI:30616"/>
    </ligand>
</feature>
<feature type="binding site" evidence="1">
    <location>
        <position position="49"/>
    </location>
    <ligand>
        <name>substrate</name>
    </ligand>
</feature>
<feature type="binding site" evidence="1">
    <location>
        <position position="136"/>
    </location>
    <ligand>
        <name>substrate</name>
    </ligand>
</feature>
<feature type="binding site" evidence="1">
    <location>
        <position position="148"/>
    </location>
    <ligand>
        <name>substrate</name>
    </ligand>
</feature>
<feature type="binding site" evidence="1">
    <location>
        <begin position="168"/>
        <end position="169"/>
    </location>
    <ligand>
        <name>ATP</name>
        <dbReference type="ChEBI" id="CHEBI:30616"/>
    </ligand>
</feature>
<feature type="binding site" evidence="1">
    <location>
        <begin position="210"/>
        <end position="216"/>
    </location>
    <ligand>
        <name>ATP</name>
        <dbReference type="ChEBI" id="CHEBI:30616"/>
    </ligand>
</feature>
<comment type="function">
    <text evidence="1">Catalyzes the transfer of a phosphate group to glutamate to form L-glutamate 5-phosphate.</text>
</comment>
<comment type="catalytic activity">
    <reaction evidence="1">
        <text>L-glutamate + ATP = L-glutamyl 5-phosphate + ADP</text>
        <dbReference type="Rhea" id="RHEA:14877"/>
        <dbReference type="ChEBI" id="CHEBI:29985"/>
        <dbReference type="ChEBI" id="CHEBI:30616"/>
        <dbReference type="ChEBI" id="CHEBI:58274"/>
        <dbReference type="ChEBI" id="CHEBI:456216"/>
        <dbReference type="EC" id="2.7.2.11"/>
    </reaction>
</comment>
<comment type="pathway">
    <text evidence="1">Amino-acid biosynthesis; L-proline biosynthesis; L-glutamate 5-semialdehyde from L-glutamate: step 1/2.</text>
</comment>
<comment type="subcellular location">
    <subcellularLocation>
        <location evidence="1">Cytoplasm</location>
    </subcellularLocation>
</comment>
<comment type="similarity">
    <text evidence="1">Belongs to the glutamate 5-kinase family.</text>
</comment>
<accession>B8HQP9</accession>
<dbReference type="EC" id="2.7.2.11" evidence="1"/>
<dbReference type="EMBL" id="CP001344">
    <property type="protein sequence ID" value="ACL44039.1"/>
    <property type="molecule type" value="Genomic_DNA"/>
</dbReference>
<dbReference type="SMR" id="B8HQP9"/>
<dbReference type="STRING" id="395961.Cyan7425_1670"/>
<dbReference type="KEGG" id="cyn:Cyan7425_1670"/>
<dbReference type="eggNOG" id="COG0263">
    <property type="taxonomic scope" value="Bacteria"/>
</dbReference>
<dbReference type="HOGENOM" id="CLU_025400_2_0_3"/>
<dbReference type="OrthoDB" id="9804434at2"/>
<dbReference type="UniPathway" id="UPA00098">
    <property type="reaction ID" value="UER00359"/>
</dbReference>
<dbReference type="GO" id="GO:0005829">
    <property type="term" value="C:cytosol"/>
    <property type="evidence" value="ECO:0007669"/>
    <property type="project" value="TreeGrafter"/>
</dbReference>
<dbReference type="GO" id="GO:0005524">
    <property type="term" value="F:ATP binding"/>
    <property type="evidence" value="ECO:0007669"/>
    <property type="project" value="UniProtKB-KW"/>
</dbReference>
<dbReference type="GO" id="GO:0004349">
    <property type="term" value="F:glutamate 5-kinase activity"/>
    <property type="evidence" value="ECO:0007669"/>
    <property type="project" value="UniProtKB-UniRule"/>
</dbReference>
<dbReference type="GO" id="GO:0003723">
    <property type="term" value="F:RNA binding"/>
    <property type="evidence" value="ECO:0007669"/>
    <property type="project" value="InterPro"/>
</dbReference>
<dbReference type="GO" id="GO:0055129">
    <property type="term" value="P:L-proline biosynthetic process"/>
    <property type="evidence" value="ECO:0007669"/>
    <property type="project" value="UniProtKB-UniRule"/>
</dbReference>
<dbReference type="CDD" id="cd04242">
    <property type="entry name" value="AAK_G5K_ProB"/>
    <property type="match status" value="1"/>
</dbReference>
<dbReference type="CDD" id="cd21157">
    <property type="entry name" value="PUA_G5K"/>
    <property type="match status" value="1"/>
</dbReference>
<dbReference type="FunFam" id="2.30.130.10:FF:000007">
    <property type="entry name" value="Glutamate 5-kinase"/>
    <property type="match status" value="1"/>
</dbReference>
<dbReference type="FunFam" id="3.40.1160.10:FF:000018">
    <property type="entry name" value="Glutamate 5-kinase"/>
    <property type="match status" value="1"/>
</dbReference>
<dbReference type="Gene3D" id="3.40.1160.10">
    <property type="entry name" value="Acetylglutamate kinase-like"/>
    <property type="match status" value="2"/>
</dbReference>
<dbReference type="Gene3D" id="2.30.130.10">
    <property type="entry name" value="PUA domain"/>
    <property type="match status" value="1"/>
</dbReference>
<dbReference type="HAMAP" id="MF_00456">
    <property type="entry name" value="ProB"/>
    <property type="match status" value="1"/>
</dbReference>
<dbReference type="InterPro" id="IPR036393">
    <property type="entry name" value="AceGlu_kinase-like_sf"/>
</dbReference>
<dbReference type="InterPro" id="IPR001048">
    <property type="entry name" value="Asp/Glu/Uridylate_kinase"/>
</dbReference>
<dbReference type="InterPro" id="IPR041739">
    <property type="entry name" value="G5K_ProB"/>
</dbReference>
<dbReference type="InterPro" id="IPR001057">
    <property type="entry name" value="Glu/AcGlu_kinase"/>
</dbReference>
<dbReference type="InterPro" id="IPR011529">
    <property type="entry name" value="Glu_5kinase"/>
</dbReference>
<dbReference type="InterPro" id="IPR005715">
    <property type="entry name" value="Glu_5kinase/COase_Synthase"/>
</dbReference>
<dbReference type="InterPro" id="IPR019797">
    <property type="entry name" value="Glutamate_5-kinase_CS"/>
</dbReference>
<dbReference type="InterPro" id="IPR002478">
    <property type="entry name" value="PUA"/>
</dbReference>
<dbReference type="InterPro" id="IPR015947">
    <property type="entry name" value="PUA-like_sf"/>
</dbReference>
<dbReference type="InterPro" id="IPR036974">
    <property type="entry name" value="PUA_sf"/>
</dbReference>
<dbReference type="NCBIfam" id="TIGR01027">
    <property type="entry name" value="proB"/>
    <property type="match status" value="1"/>
</dbReference>
<dbReference type="PANTHER" id="PTHR43654">
    <property type="entry name" value="GLUTAMATE 5-KINASE"/>
    <property type="match status" value="1"/>
</dbReference>
<dbReference type="PANTHER" id="PTHR43654:SF3">
    <property type="entry name" value="GLUTAMATE 5-KINASE"/>
    <property type="match status" value="1"/>
</dbReference>
<dbReference type="Pfam" id="PF00696">
    <property type="entry name" value="AA_kinase"/>
    <property type="match status" value="1"/>
</dbReference>
<dbReference type="Pfam" id="PF01472">
    <property type="entry name" value="PUA"/>
    <property type="match status" value="1"/>
</dbReference>
<dbReference type="PIRSF" id="PIRSF000729">
    <property type="entry name" value="GK"/>
    <property type="match status" value="1"/>
</dbReference>
<dbReference type="PRINTS" id="PR00474">
    <property type="entry name" value="GLU5KINASE"/>
</dbReference>
<dbReference type="SMART" id="SM00359">
    <property type="entry name" value="PUA"/>
    <property type="match status" value="1"/>
</dbReference>
<dbReference type="SUPFAM" id="SSF53633">
    <property type="entry name" value="Carbamate kinase-like"/>
    <property type="match status" value="1"/>
</dbReference>
<dbReference type="SUPFAM" id="SSF88697">
    <property type="entry name" value="PUA domain-like"/>
    <property type="match status" value="1"/>
</dbReference>
<dbReference type="PROSITE" id="PS00902">
    <property type="entry name" value="GLUTAMATE_5_KINASE"/>
    <property type="match status" value="1"/>
</dbReference>
<dbReference type="PROSITE" id="PS50890">
    <property type="entry name" value="PUA"/>
    <property type="match status" value="1"/>
</dbReference>
<name>PROB_CYAP4</name>
<gene>
    <name evidence="1" type="primary">proB</name>
    <name type="ordered locus">Cyan7425_1670</name>
</gene>
<keyword id="KW-0028">Amino-acid biosynthesis</keyword>
<keyword id="KW-0067">ATP-binding</keyword>
<keyword id="KW-0963">Cytoplasm</keyword>
<keyword id="KW-0418">Kinase</keyword>
<keyword id="KW-0547">Nucleotide-binding</keyword>
<keyword id="KW-0641">Proline biosynthesis</keyword>
<keyword id="KW-0808">Transferase</keyword>
<sequence>MTQTLVVKIGTSSLTHPKTGDLSLSTIAVLVETLSKLRRQGQRIVLVSSGAVGVGCGRLGLSERPRTMALKQAVAAVGQGRLMRIYDDFFTTLNQPIAQVLLTRGDLVQRQRYLNAYNTFQELFNLGVIPIVNENDTVAVDELKFGDNDTLSALVASLVEADWLFLLTDVDRLYSADPRQQPDAQPISVVNSIEELAQVQVGDRGSIWGTGGMATKITAAEIAGEAGVRTVITEGRSPVNIERILAGEALGTQFEPQPRPINARKRWIAHALVPTGKLYLDRGAVQAIAQLGKSLLAAGIVQVEGVFQSQDAVLLCDRAGQEIGRGLVNYNSQELEKIQGRRSEEIPTILGYSGAETVVHRDNLVLS</sequence>
<reference key="1">
    <citation type="journal article" date="2011" name="MBio">
        <title>Novel metabolic attributes of the genus Cyanothece, comprising a group of unicellular nitrogen-fixing Cyanobacteria.</title>
        <authorList>
            <person name="Bandyopadhyay A."/>
            <person name="Elvitigala T."/>
            <person name="Welsh E."/>
            <person name="Stockel J."/>
            <person name="Liberton M."/>
            <person name="Min H."/>
            <person name="Sherman L.A."/>
            <person name="Pakrasi H.B."/>
        </authorList>
    </citation>
    <scope>NUCLEOTIDE SEQUENCE [LARGE SCALE GENOMIC DNA]</scope>
    <source>
        <strain>PCC 7425 / ATCC 29141</strain>
    </source>
</reference>
<protein>
    <recommendedName>
        <fullName evidence="1">Glutamate 5-kinase</fullName>
        <ecNumber evidence="1">2.7.2.11</ecNumber>
    </recommendedName>
    <alternativeName>
        <fullName evidence="1">Gamma-glutamyl kinase</fullName>
        <shortName evidence="1">GK</shortName>
    </alternativeName>
</protein>